<keyword id="KW-0963">Cytoplasm</keyword>
<keyword id="KW-0227">DNA damage</keyword>
<keyword id="KW-0233">DNA recombination</keyword>
<keyword id="KW-0234">DNA repair</keyword>
<keyword id="KW-0238">DNA-binding</keyword>
<proteinExistence type="inferred from homology"/>
<protein>
    <recommendedName>
        <fullName evidence="1">Holliday junction branch migration complex subunit RuvA</fullName>
    </recommendedName>
</protein>
<dbReference type="EMBL" id="CP000857">
    <property type="protein sequence ID" value="ACN45957.1"/>
    <property type="molecule type" value="Genomic_DNA"/>
</dbReference>
<dbReference type="RefSeq" id="WP_000580334.1">
    <property type="nucleotide sequence ID" value="NC_012125.1"/>
</dbReference>
<dbReference type="SMR" id="C0Q2F4"/>
<dbReference type="KEGG" id="sei:SPC_1819"/>
<dbReference type="HOGENOM" id="CLU_087936_0_0_6"/>
<dbReference type="Proteomes" id="UP000001599">
    <property type="component" value="Chromosome"/>
</dbReference>
<dbReference type="GO" id="GO:0005737">
    <property type="term" value="C:cytoplasm"/>
    <property type="evidence" value="ECO:0007669"/>
    <property type="project" value="UniProtKB-SubCell"/>
</dbReference>
<dbReference type="GO" id="GO:0009379">
    <property type="term" value="C:Holliday junction helicase complex"/>
    <property type="evidence" value="ECO:0007669"/>
    <property type="project" value="InterPro"/>
</dbReference>
<dbReference type="GO" id="GO:0048476">
    <property type="term" value="C:Holliday junction resolvase complex"/>
    <property type="evidence" value="ECO:0007669"/>
    <property type="project" value="UniProtKB-UniRule"/>
</dbReference>
<dbReference type="GO" id="GO:0005524">
    <property type="term" value="F:ATP binding"/>
    <property type="evidence" value="ECO:0007669"/>
    <property type="project" value="InterPro"/>
</dbReference>
<dbReference type="GO" id="GO:0000400">
    <property type="term" value="F:four-way junction DNA binding"/>
    <property type="evidence" value="ECO:0007669"/>
    <property type="project" value="UniProtKB-UniRule"/>
</dbReference>
<dbReference type="GO" id="GO:0009378">
    <property type="term" value="F:four-way junction helicase activity"/>
    <property type="evidence" value="ECO:0007669"/>
    <property type="project" value="InterPro"/>
</dbReference>
<dbReference type="GO" id="GO:0006310">
    <property type="term" value="P:DNA recombination"/>
    <property type="evidence" value="ECO:0007669"/>
    <property type="project" value="UniProtKB-UniRule"/>
</dbReference>
<dbReference type="GO" id="GO:0006281">
    <property type="term" value="P:DNA repair"/>
    <property type="evidence" value="ECO:0007669"/>
    <property type="project" value="UniProtKB-UniRule"/>
</dbReference>
<dbReference type="CDD" id="cd14332">
    <property type="entry name" value="UBA_RuvA_C"/>
    <property type="match status" value="1"/>
</dbReference>
<dbReference type="FunFam" id="1.10.150.20:FF:000012">
    <property type="entry name" value="Holliday junction ATP-dependent DNA helicase RuvA"/>
    <property type="match status" value="1"/>
</dbReference>
<dbReference type="FunFam" id="1.10.8.10:FF:000008">
    <property type="entry name" value="Holliday junction ATP-dependent DNA helicase RuvA"/>
    <property type="match status" value="1"/>
</dbReference>
<dbReference type="FunFam" id="2.40.50.140:FF:000083">
    <property type="entry name" value="Holliday junction ATP-dependent DNA helicase RuvA"/>
    <property type="match status" value="1"/>
</dbReference>
<dbReference type="Gene3D" id="1.10.150.20">
    <property type="entry name" value="5' to 3' exonuclease, C-terminal subdomain"/>
    <property type="match status" value="1"/>
</dbReference>
<dbReference type="Gene3D" id="1.10.8.10">
    <property type="entry name" value="DNA helicase RuvA subunit, C-terminal domain"/>
    <property type="match status" value="1"/>
</dbReference>
<dbReference type="Gene3D" id="2.40.50.140">
    <property type="entry name" value="Nucleic acid-binding proteins"/>
    <property type="match status" value="1"/>
</dbReference>
<dbReference type="HAMAP" id="MF_00031">
    <property type="entry name" value="DNA_HJ_migration_RuvA"/>
    <property type="match status" value="1"/>
</dbReference>
<dbReference type="InterPro" id="IPR013849">
    <property type="entry name" value="DNA_helicase_Holl-junc_RuvA_I"/>
</dbReference>
<dbReference type="InterPro" id="IPR003583">
    <property type="entry name" value="Hlx-hairpin-Hlx_DNA-bd_motif"/>
</dbReference>
<dbReference type="InterPro" id="IPR012340">
    <property type="entry name" value="NA-bd_OB-fold"/>
</dbReference>
<dbReference type="InterPro" id="IPR000085">
    <property type="entry name" value="RuvA"/>
</dbReference>
<dbReference type="InterPro" id="IPR010994">
    <property type="entry name" value="RuvA_2-like"/>
</dbReference>
<dbReference type="InterPro" id="IPR011114">
    <property type="entry name" value="RuvA_C"/>
</dbReference>
<dbReference type="InterPro" id="IPR036267">
    <property type="entry name" value="RuvA_C_sf"/>
</dbReference>
<dbReference type="NCBIfam" id="TIGR00084">
    <property type="entry name" value="ruvA"/>
    <property type="match status" value="1"/>
</dbReference>
<dbReference type="Pfam" id="PF14520">
    <property type="entry name" value="HHH_5"/>
    <property type="match status" value="1"/>
</dbReference>
<dbReference type="Pfam" id="PF07499">
    <property type="entry name" value="RuvA_C"/>
    <property type="match status" value="1"/>
</dbReference>
<dbReference type="Pfam" id="PF01330">
    <property type="entry name" value="RuvA_N"/>
    <property type="match status" value="1"/>
</dbReference>
<dbReference type="SMART" id="SM00278">
    <property type="entry name" value="HhH1"/>
    <property type="match status" value="2"/>
</dbReference>
<dbReference type="SUPFAM" id="SSF46929">
    <property type="entry name" value="DNA helicase RuvA subunit, C-terminal domain"/>
    <property type="match status" value="1"/>
</dbReference>
<dbReference type="SUPFAM" id="SSF50249">
    <property type="entry name" value="Nucleic acid-binding proteins"/>
    <property type="match status" value="1"/>
</dbReference>
<dbReference type="SUPFAM" id="SSF47781">
    <property type="entry name" value="RuvA domain 2-like"/>
    <property type="match status" value="1"/>
</dbReference>
<evidence type="ECO:0000255" key="1">
    <source>
        <dbReference type="HAMAP-Rule" id="MF_00031"/>
    </source>
</evidence>
<sequence>MIGRLRGIILEKQPPIVLLETGGVGYEVHMPMTCFYELPEAGQEAIVFTHFVVREDAQLLYGFNNKQERTLFKELIKTNGVGPKLALAILSGMSAQQFVNAVEREELGALVKLPGIGKKTAERLIVEMKDRFKGLHGDLFTPAVDLVLTSPASPTSEDAEQEAVAALVALGYKPQEASRMVNKIARPDASSETLIRDALRAAL</sequence>
<gene>
    <name evidence="1" type="primary">ruvA</name>
    <name type="ordered locus">SPC_1819</name>
</gene>
<comment type="function">
    <text evidence="1">The RuvA-RuvB-RuvC complex processes Holliday junction (HJ) DNA during genetic recombination and DNA repair, while the RuvA-RuvB complex plays an important role in the rescue of blocked DNA replication forks via replication fork reversal (RFR). RuvA specifically binds to HJ cruciform DNA, conferring on it an open structure. The RuvB hexamer acts as an ATP-dependent pump, pulling dsDNA into and through the RuvAB complex. HJ branch migration allows RuvC to scan DNA until it finds its consensus sequence, where it cleaves and resolves the cruciform DNA.</text>
</comment>
<comment type="subunit">
    <text evidence="1">Homotetramer. Forms an RuvA(8)-RuvB(12)-Holliday junction (HJ) complex. HJ DNA is sandwiched between 2 RuvA tetramers; dsDNA enters through RuvA and exits via RuvB. An RuvB hexamer assembles on each DNA strand where it exits the tetramer. Each RuvB hexamer is contacted by two RuvA subunits (via domain III) on 2 adjacent RuvB subunits; this complex drives branch migration. In the full resolvosome a probable DNA-RuvA(4)-RuvB(12)-RuvC(2) complex forms which resolves the HJ.</text>
</comment>
<comment type="subcellular location">
    <subcellularLocation>
        <location evidence="1">Cytoplasm</location>
    </subcellularLocation>
</comment>
<comment type="domain">
    <text evidence="1">Has three domains with a flexible linker between the domains II and III and assumes an 'L' shape. Domain III is highly mobile and contacts RuvB.</text>
</comment>
<comment type="similarity">
    <text evidence="1">Belongs to the RuvA family.</text>
</comment>
<organism>
    <name type="scientific">Salmonella paratyphi C (strain RKS4594)</name>
    <dbReference type="NCBI Taxonomy" id="476213"/>
    <lineage>
        <taxon>Bacteria</taxon>
        <taxon>Pseudomonadati</taxon>
        <taxon>Pseudomonadota</taxon>
        <taxon>Gammaproteobacteria</taxon>
        <taxon>Enterobacterales</taxon>
        <taxon>Enterobacteriaceae</taxon>
        <taxon>Salmonella</taxon>
    </lineage>
</organism>
<name>RUVA_SALPC</name>
<accession>C0Q2F4</accession>
<reference key="1">
    <citation type="journal article" date="2009" name="PLoS ONE">
        <title>Salmonella paratyphi C: genetic divergence from Salmonella choleraesuis and pathogenic convergence with Salmonella typhi.</title>
        <authorList>
            <person name="Liu W.-Q."/>
            <person name="Feng Y."/>
            <person name="Wang Y."/>
            <person name="Zou Q.-H."/>
            <person name="Chen F."/>
            <person name="Guo J.-T."/>
            <person name="Peng Y.-H."/>
            <person name="Jin Y."/>
            <person name="Li Y.-G."/>
            <person name="Hu S.-N."/>
            <person name="Johnston R.N."/>
            <person name="Liu G.-R."/>
            <person name="Liu S.-L."/>
        </authorList>
    </citation>
    <scope>NUCLEOTIDE SEQUENCE [LARGE SCALE GENOMIC DNA]</scope>
    <source>
        <strain>RKS4594</strain>
    </source>
</reference>
<feature type="chain" id="PRO_1000195175" description="Holliday junction branch migration complex subunit RuvA">
    <location>
        <begin position="1"/>
        <end position="203"/>
    </location>
</feature>
<feature type="region of interest" description="Domain I" evidence="1">
    <location>
        <begin position="1"/>
        <end position="64"/>
    </location>
</feature>
<feature type="region of interest" description="Domain II" evidence="1">
    <location>
        <begin position="65"/>
        <end position="142"/>
    </location>
</feature>
<feature type="region of interest" description="Flexible linker" evidence="1">
    <location>
        <begin position="143"/>
        <end position="154"/>
    </location>
</feature>
<feature type="region of interest" description="Domain III" evidence="1">
    <location>
        <begin position="155"/>
        <end position="203"/>
    </location>
</feature>